<organism>
    <name type="scientific">Brucella abortus (strain 2308)</name>
    <dbReference type="NCBI Taxonomy" id="359391"/>
    <lineage>
        <taxon>Bacteria</taxon>
        <taxon>Pseudomonadati</taxon>
        <taxon>Pseudomonadota</taxon>
        <taxon>Alphaproteobacteria</taxon>
        <taxon>Hyphomicrobiales</taxon>
        <taxon>Brucellaceae</taxon>
        <taxon>Brucella/Ochrobactrum group</taxon>
        <taxon>Brucella</taxon>
    </lineage>
</organism>
<gene>
    <name evidence="1" type="primary">aroQ</name>
    <name type="synonym">aroD</name>
    <name type="ordered locus">BAB1_0926</name>
</gene>
<proteinExistence type="inferred from homology"/>
<feature type="chain" id="PRO_0000159880" description="3-dehydroquinate dehydratase">
    <location>
        <begin position="1"/>
        <end position="157"/>
    </location>
</feature>
<feature type="active site" description="Proton acceptor" evidence="1">
    <location>
        <position position="24"/>
    </location>
</feature>
<feature type="active site" description="Proton donor" evidence="1">
    <location>
        <position position="101"/>
    </location>
</feature>
<feature type="binding site" evidence="1">
    <location>
        <position position="75"/>
    </location>
    <ligand>
        <name>substrate</name>
    </ligand>
</feature>
<feature type="binding site" evidence="1">
    <location>
        <position position="81"/>
    </location>
    <ligand>
        <name>substrate</name>
    </ligand>
</feature>
<feature type="binding site" evidence="1">
    <location>
        <position position="88"/>
    </location>
    <ligand>
        <name>substrate</name>
    </ligand>
</feature>
<feature type="binding site" evidence="1">
    <location>
        <begin position="102"/>
        <end position="103"/>
    </location>
    <ligand>
        <name>substrate</name>
    </ligand>
</feature>
<feature type="binding site" evidence="1">
    <location>
        <position position="112"/>
    </location>
    <ligand>
        <name>substrate</name>
    </ligand>
</feature>
<feature type="site" description="Transition state stabilizer" evidence="1">
    <location>
        <position position="19"/>
    </location>
</feature>
<accession>Q2YNP1</accession>
<accession>Q57DK1</accession>
<accession>Q9AGU9</accession>
<dbReference type="EC" id="4.2.1.10" evidence="1"/>
<dbReference type="EMBL" id="AF326476">
    <property type="protein sequence ID" value="AAK27448.1"/>
    <property type="status" value="ALT_INIT"/>
    <property type="molecule type" value="Genomic_DNA"/>
</dbReference>
<dbReference type="EMBL" id="AM040264">
    <property type="protein sequence ID" value="CAJ10882.1"/>
    <property type="molecule type" value="Genomic_DNA"/>
</dbReference>
<dbReference type="RefSeq" id="WP_002966789.1">
    <property type="nucleotide sequence ID" value="NZ_KN046823.1"/>
</dbReference>
<dbReference type="SMR" id="Q2YNP1"/>
<dbReference type="STRING" id="359391.BAB1_0926"/>
<dbReference type="GeneID" id="93016716"/>
<dbReference type="KEGG" id="bmf:BAB1_0926"/>
<dbReference type="PATRIC" id="fig|359391.11.peg.3238"/>
<dbReference type="HOGENOM" id="CLU_090968_1_0_5"/>
<dbReference type="UniPathway" id="UPA00053">
    <property type="reaction ID" value="UER00086"/>
</dbReference>
<dbReference type="Proteomes" id="UP000002719">
    <property type="component" value="Chromosome I"/>
</dbReference>
<dbReference type="GO" id="GO:0003855">
    <property type="term" value="F:3-dehydroquinate dehydratase activity"/>
    <property type="evidence" value="ECO:0007669"/>
    <property type="project" value="UniProtKB-UniRule"/>
</dbReference>
<dbReference type="GO" id="GO:0008652">
    <property type="term" value="P:amino acid biosynthetic process"/>
    <property type="evidence" value="ECO:0007669"/>
    <property type="project" value="UniProtKB-KW"/>
</dbReference>
<dbReference type="GO" id="GO:0009073">
    <property type="term" value="P:aromatic amino acid family biosynthetic process"/>
    <property type="evidence" value="ECO:0007669"/>
    <property type="project" value="UniProtKB-KW"/>
</dbReference>
<dbReference type="GO" id="GO:0009423">
    <property type="term" value="P:chorismate biosynthetic process"/>
    <property type="evidence" value="ECO:0007669"/>
    <property type="project" value="UniProtKB-UniRule"/>
</dbReference>
<dbReference type="GO" id="GO:0019631">
    <property type="term" value="P:quinate catabolic process"/>
    <property type="evidence" value="ECO:0007669"/>
    <property type="project" value="TreeGrafter"/>
</dbReference>
<dbReference type="CDD" id="cd00466">
    <property type="entry name" value="DHQase_II"/>
    <property type="match status" value="1"/>
</dbReference>
<dbReference type="Gene3D" id="3.40.50.9100">
    <property type="entry name" value="Dehydroquinase, class II"/>
    <property type="match status" value="1"/>
</dbReference>
<dbReference type="HAMAP" id="MF_00169">
    <property type="entry name" value="AroQ"/>
    <property type="match status" value="1"/>
</dbReference>
<dbReference type="InterPro" id="IPR001874">
    <property type="entry name" value="DHquinase_II"/>
</dbReference>
<dbReference type="InterPro" id="IPR018509">
    <property type="entry name" value="DHquinase_II_CS"/>
</dbReference>
<dbReference type="InterPro" id="IPR036441">
    <property type="entry name" value="DHquinase_II_sf"/>
</dbReference>
<dbReference type="NCBIfam" id="TIGR01088">
    <property type="entry name" value="aroQ"/>
    <property type="match status" value="1"/>
</dbReference>
<dbReference type="NCBIfam" id="NF003805">
    <property type="entry name" value="PRK05395.1-2"/>
    <property type="match status" value="1"/>
</dbReference>
<dbReference type="NCBIfam" id="NF003806">
    <property type="entry name" value="PRK05395.1-3"/>
    <property type="match status" value="1"/>
</dbReference>
<dbReference type="NCBIfam" id="NF003807">
    <property type="entry name" value="PRK05395.1-4"/>
    <property type="match status" value="1"/>
</dbReference>
<dbReference type="PANTHER" id="PTHR21272">
    <property type="entry name" value="CATABOLIC 3-DEHYDROQUINASE"/>
    <property type="match status" value="1"/>
</dbReference>
<dbReference type="PANTHER" id="PTHR21272:SF3">
    <property type="entry name" value="CATABOLIC 3-DEHYDROQUINASE"/>
    <property type="match status" value="1"/>
</dbReference>
<dbReference type="Pfam" id="PF01220">
    <property type="entry name" value="DHquinase_II"/>
    <property type="match status" value="1"/>
</dbReference>
<dbReference type="PIRSF" id="PIRSF001399">
    <property type="entry name" value="DHquinase_II"/>
    <property type="match status" value="1"/>
</dbReference>
<dbReference type="SUPFAM" id="SSF52304">
    <property type="entry name" value="Type II 3-dehydroquinate dehydratase"/>
    <property type="match status" value="1"/>
</dbReference>
<dbReference type="PROSITE" id="PS01029">
    <property type="entry name" value="DEHYDROQUINASE_II"/>
    <property type="match status" value="1"/>
</dbReference>
<evidence type="ECO:0000255" key="1">
    <source>
        <dbReference type="HAMAP-Rule" id="MF_00169"/>
    </source>
</evidence>
<evidence type="ECO:0000305" key="2"/>
<comment type="function">
    <text evidence="1">Catalyzes a trans-dehydration via an enolate intermediate.</text>
</comment>
<comment type="catalytic activity">
    <reaction evidence="1">
        <text>3-dehydroquinate = 3-dehydroshikimate + H2O</text>
        <dbReference type="Rhea" id="RHEA:21096"/>
        <dbReference type="ChEBI" id="CHEBI:15377"/>
        <dbReference type="ChEBI" id="CHEBI:16630"/>
        <dbReference type="ChEBI" id="CHEBI:32364"/>
        <dbReference type="EC" id="4.2.1.10"/>
    </reaction>
</comment>
<comment type="pathway">
    <text evidence="1">Metabolic intermediate biosynthesis; chorismate biosynthesis; chorismate from D-erythrose 4-phosphate and phosphoenolpyruvate: step 3/7.</text>
</comment>
<comment type="subunit">
    <text evidence="1">Homododecamer.</text>
</comment>
<comment type="similarity">
    <text evidence="1">Belongs to the type-II 3-dehydroquinase family.</text>
</comment>
<comment type="sequence caution" evidence="2">
    <conflict type="erroneous initiation">
        <sequence resource="EMBL-CDS" id="AAK27448"/>
    </conflict>
</comment>
<sequence length="157" mass="16968">MTKTVFVLNGPNLNLLGKREPGIYGVATLDDIEASCKREAGQLELQIDFRQSNHEGDLVSWIQEAGEKNAYVLINPAAYSHTSVAIHDAIRSARVTVVEVHLSNIHAREAFRHHSHVSAVAKGVICGFGAEGYLLGLRALAAIAKEEEKNGQSIKGA</sequence>
<name>AROQ_BRUA2</name>
<protein>
    <recommendedName>
        <fullName evidence="1">3-dehydroquinate dehydratase</fullName>
        <shortName evidence="1">3-dehydroquinase</shortName>
        <ecNumber evidence="1">4.2.1.10</ecNumber>
    </recommendedName>
    <alternativeName>
        <fullName evidence="1">Type II DHQase</fullName>
    </alternativeName>
</protein>
<keyword id="KW-0028">Amino-acid biosynthesis</keyword>
<keyword id="KW-0057">Aromatic amino acid biosynthesis</keyword>
<keyword id="KW-0456">Lyase</keyword>
<keyword id="KW-1185">Reference proteome</keyword>
<reference key="1">
    <citation type="submission" date="2000-12" db="EMBL/GenBank/DDBJ databases">
        <title>Cloning and sequence of the aroD gene of Brucella abortus.</title>
        <authorList>
            <person name="Essenberg R.C."/>
        </authorList>
    </citation>
    <scope>NUCLEOTIDE SEQUENCE [GENOMIC DNA]</scope>
</reference>
<reference key="2">
    <citation type="journal article" date="2005" name="Infect. Immun.">
        <title>Whole-genome analyses of speciation events in pathogenic Brucellae.</title>
        <authorList>
            <person name="Chain P.S."/>
            <person name="Comerci D.J."/>
            <person name="Tolmasky M.E."/>
            <person name="Larimer F.W."/>
            <person name="Malfatti S.A."/>
            <person name="Vergez L.M."/>
            <person name="Aguero F."/>
            <person name="Land M.L."/>
            <person name="Ugalde R.A."/>
            <person name="Garcia E."/>
        </authorList>
    </citation>
    <scope>NUCLEOTIDE SEQUENCE [LARGE SCALE GENOMIC DNA]</scope>
    <source>
        <strain>2308</strain>
    </source>
</reference>